<accession>Q20296</accession>
<accession>Q9BI90</accession>
<accession>Q9BI91</accession>
<organism>
    <name type="scientific">Caenorhabditis elegans</name>
    <dbReference type="NCBI Taxonomy" id="6239"/>
    <lineage>
        <taxon>Eukaryota</taxon>
        <taxon>Metazoa</taxon>
        <taxon>Ecdysozoa</taxon>
        <taxon>Nematoda</taxon>
        <taxon>Chromadorea</taxon>
        <taxon>Rhabditida</taxon>
        <taxon>Rhabditina</taxon>
        <taxon>Rhabditomorpha</taxon>
        <taxon>Rhabditoidea</taxon>
        <taxon>Rhabditidae</taxon>
        <taxon>Peloderinae</taxon>
        <taxon>Caenorhabditis</taxon>
    </lineage>
</organism>
<reference key="1">
    <citation type="journal article" date="1998" name="Science">
        <title>Genome sequence of the nematode C. elegans: a platform for investigating biology.</title>
        <authorList>
            <consortium name="The C. elegans sequencing consortium"/>
        </authorList>
    </citation>
    <scope>NUCLEOTIDE SEQUENCE [LARGE SCALE GENOMIC DNA]</scope>
    <source>
        <strain>Bristol N2</strain>
    </source>
</reference>
<evidence type="ECO:0000250" key="1"/>
<evidence type="ECO:0000255" key="2">
    <source>
        <dbReference type="PROSITE-ProRule" id="PRU00502"/>
    </source>
</evidence>
<evidence type="ECO:0000256" key="3">
    <source>
        <dbReference type="SAM" id="MobiDB-lite"/>
    </source>
</evidence>
<evidence type="ECO:0000305" key="4"/>
<name>HDA6_CAEEL</name>
<comment type="function">
    <text evidence="1">Probable histone deacetylase. Histone deacetylases are responsible for the deacetylation of lysine residues on the N-terminal part of the core histones (H2A, H2B, H3 and H4). Histone deacetylation gives a tag for epigenetic repression and plays an important role in transcriptional regulation, cell cycle progression and developmental events. Histone deacetylases act via the formation of large multiprotein complexes (By similarity).</text>
</comment>
<comment type="catalytic activity">
    <reaction>
        <text>N(6)-acetyl-L-lysyl-[histone] + H2O = L-lysyl-[histone] + acetate</text>
        <dbReference type="Rhea" id="RHEA:58196"/>
        <dbReference type="Rhea" id="RHEA-COMP:9845"/>
        <dbReference type="Rhea" id="RHEA-COMP:11338"/>
        <dbReference type="ChEBI" id="CHEBI:15377"/>
        <dbReference type="ChEBI" id="CHEBI:29969"/>
        <dbReference type="ChEBI" id="CHEBI:30089"/>
        <dbReference type="ChEBI" id="CHEBI:61930"/>
        <dbReference type="EC" id="3.5.1.98"/>
    </reaction>
</comment>
<comment type="cofactor">
    <cofactor evidence="1">
        <name>Zn(2+)</name>
        <dbReference type="ChEBI" id="CHEBI:29105"/>
    </cofactor>
    <text evidence="1">Binds 3 Zn(2+) ions per subunit.</text>
</comment>
<comment type="subcellular location">
    <subcellularLocation>
        <location evidence="4">Nucleus</location>
    </subcellularLocation>
</comment>
<comment type="alternative products">
    <event type="alternative splicing"/>
    <isoform>
        <id>Q20296-1</id>
        <name>b</name>
        <sequence type="displayed"/>
    </isoform>
    <isoform>
        <id>Q20296-2</id>
        <name>a</name>
        <sequence type="described" ref="VSP_007436 VSP_007437"/>
    </isoform>
</comment>
<comment type="similarity">
    <text evidence="4">Belongs to the histone deacetylase family. HD type 2 subfamily.</text>
</comment>
<dbReference type="EC" id="3.5.1.98"/>
<dbReference type="EMBL" id="FO081367">
    <property type="protein sequence ID" value="CCD71098.1"/>
    <property type="molecule type" value="Genomic_DNA"/>
</dbReference>
<dbReference type="EMBL" id="FO081367">
    <property type="protein sequence ID" value="CCD71099.1"/>
    <property type="molecule type" value="Genomic_DNA"/>
</dbReference>
<dbReference type="RefSeq" id="NP_500787.1">
    <molecule id="Q20296-1"/>
    <property type="nucleotide sequence ID" value="NM_068386.5"/>
</dbReference>
<dbReference type="RefSeq" id="NP_500788.1">
    <molecule id="Q20296-2"/>
    <property type="nucleotide sequence ID" value="NM_068387.5"/>
</dbReference>
<dbReference type="SMR" id="Q20296"/>
<dbReference type="BioGRID" id="42439">
    <property type="interactions" value="7"/>
</dbReference>
<dbReference type="FunCoup" id="Q20296">
    <property type="interactions" value="2444"/>
</dbReference>
<dbReference type="STRING" id="6239.F41H10.6c.1"/>
<dbReference type="PaxDb" id="6239-F41H10.6c"/>
<dbReference type="PeptideAtlas" id="Q20296"/>
<dbReference type="EnsemblMetazoa" id="F41H10.6a.1">
    <molecule id="Q20296-2"/>
    <property type="protein sequence ID" value="F41H10.6a.1"/>
    <property type="gene ID" value="WBGene00018319"/>
</dbReference>
<dbReference type="EnsemblMetazoa" id="F41H10.6b.1">
    <molecule id="Q20296-1"/>
    <property type="protein sequence ID" value="F41H10.6b.1"/>
    <property type="gene ID" value="WBGene00018319"/>
</dbReference>
<dbReference type="GeneID" id="177316"/>
<dbReference type="KEGG" id="cel:CELE_F41H10.6"/>
<dbReference type="UCSC" id="Y51H1A.5.1">
    <molecule id="Q20296-1"/>
    <property type="organism name" value="c. elegans"/>
</dbReference>
<dbReference type="AGR" id="WB:WBGene00018319"/>
<dbReference type="CTD" id="177316"/>
<dbReference type="WormBase" id="F41H10.6a">
    <molecule id="Q20296-2"/>
    <property type="protein sequence ID" value="CE20772"/>
    <property type="gene ID" value="WBGene00018319"/>
    <property type="gene designation" value="hda-6"/>
</dbReference>
<dbReference type="WormBase" id="F41H10.6b">
    <molecule id="Q20296-1"/>
    <property type="protein sequence ID" value="CE25887"/>
    <property type="gene ID" value="WBGene00018319"/>
    <property type="gene designation" value="hda-6"/>
</dbReference>
<dbReference type="eggNOG" id="KOG1343">
    <property type="taxonomic scope" value="Eukaryota"/>
</dbReference>
<dbReference type="GeneTree" id="ENSGT00940000159563"/>
<dbReference type="InParanoid" id="Q20296"/>
<dbReference type="OrthoDB" id="424012at2759"/>
<dbReference type="PRO" id="PR:Q20296"/>
<dbReference type="Proteomes" id="UP000001940">
    <property type="component" value="Chromosome IV"/>
</dbReference>
<dbReference type="Bgee" id="WBGene00018319">
    <property type="expression patterns" value="Expressed in germ line (C elegans) and 4 other cell types or tissues"/>
</dbReference>
<dbReference type="ExpressionAtlas" id="Q20296">
    <property type="expression patterns" value="baseline and differential"/>
</dbReference>
<dbReference type="GO" id="GO:0000118">
    <property type="term" value="C:histone deacetylase complex"/>
    <property type="evidence" value="ECO:0000318"/>
    <property type="project" value="GO_Central"/>
</dbReference>
<dbReference type="GO" id="GO:0004407">
    <property type="term" value="F:histone deacetylase activity"/>
    <property type="evidence" value="ECO:0000318"/>
    <property type="project" value="GO_Central"/>
</dbReference>
<dbReference type="GO" id="GO:0141221">
    <property type="term" value="F:histone deacetylase activity, hydrolytic mechanism"/>
    <property type="evidence" value="ECO:0007669"/>
    <property type="project" value="UniProtKB-EC"/>
</dbReference>
<dbReference type="GO" id="GO:0033558">
    <property type="term" value="F:protein lysine deacetylase activity"/>
    <property type="evidence" value="ECO:0000250"/>
    <property type="project" value="WormBase"/>
</dbReference>
<dbReference type="GO" id="GO:0008270">
    <property type="term" value="F:zinc ion binding"/>
    <property type="evidence" value="ECO:0007669"/>
    <property type="project" value="UniProtKB-KW"/>
</dbReference>
<dbReference type="GO" id="GO:0040029">
    <property type="term" value="P:epigenetic regulation of gene expression"/>
    <property type="evidence" value="ECO:0000318"/>
    <property type="project" value="GO_Central"/>
</dbReference>
<dbReference type="FunFam" id="3.40.800.20:FF:000014">
    <property type="entry name" value="Histone deacetylase 15"/>
    <property type="match status" value="1"/>
</dbReference>
<dbReference type="FunFam" id="3.30.40.10:FF:000342">
    <property type="entry name" value="Histone deacetylase 6"/>
    <property type="match status" value="1"/>
</dbReference>
<dbReference type="FunFam" id="3.40.800.20:FF:000048">
    <property type="entry name" value="Histone deacetylase 6"/>
    <property type="match status" value="1"/>
</dbReference>
<dbReference type="Gene3D" id="3.40.800.20">
    <property type="entry name" value="Histone deacetylase domain"/>
    <property type="match status" value="2"/>
</dbReference>
<dbReference type="Gene3D" id="3.30.40.10">
    <property type="entry name" value="Zinc/RING finger domain, C3HC4 (zinc finger)"/>
    <property type="match status" value="1"/>
</dbReference>
<dbReference type="InterPro" id="IPR050284">
    <property type="entry name" value="HDAC_PDAC"/>
</dbReference>
<dbReference type="InterPro" id="IPR000286">
    <property type="entry name" value="His_deacetylse"/>
</dbReference>
<dbReference type="InterPro" id="IPR023801">
    <property type="entry name" value="His_deacetylse_dom"/>
</dbReference>
<dbReference type="InterPro" id="IPR037138">
    <property type="entry name" value="His_deacetylse_dom_sf"/>
</dbReference>
<dbReference type="InterPro" id="IPR023696">
    <property type="entry name" value="Ureohydrolase_dom_sf"/>
</dbReference>
<dbReference type="InterPro" id="IPR013083">
    <property type="entry name" value="Znf_RING/FYVE/PHD"/>
</dbReference>
<dbReference type="InterPro" id="IPR001607">
    <property type="entry name" value="Znf_UBP"/>
</dbReference>
<dbReference type="PANTHER" id="PTHR10625:SF47">
    <property type="entry name" value="HISTONE DEACETYLASE 6"/>
    <property type="match status" value="1"/>
</dbReference>
<dbReference type="PANTHER" id="PTHR10625">
    <property type="entry name" value="HISTONE DEACETYLASE HDAC1-RELATED"/>
    <property type="match status" value="1"/>
</dbReference>
<dbReference type="Pfam" id="PF00850">
    <property type="entry name" value="Hist_deacetyl"/>
    <property type="match status" value="2"/>
</dbReference>
<dbReference type="Pfam" id="PF02148">
    <property type="entry name" value="zf-UBP"/>
    <property type="match status" value="1"/>
</dbReference>
<dbReference type="PRINTS" id="PR01270">
    <property type="entry name" value="HDASUPER"/>
</dbReference>
<dbReference type="SMART" id="SM00290">
    <property type="entry name" value="ZnF_UBP"/>
    <property type="match status" value="1"/>
</dbReference>
<dbReference type="SUPFAM" id="SSF52768">
    <property type="entry name" value="Arginase/deacetylase"/>
    <property type="match status" value="2"/>
</dbReference>
<dbReference type="SUPFAM" id="SSF57850">
    <property type="entry name" value="RING/U-box"/>
    <property type="match status" value="1"/>
</dbReference>
<dbReference type="PROSITE" id="PS50271">
    <property type="entry name" value="ZF_UBP"/>
    <property type="match status" value="1"/>
</dbReference>
<keyword id="KW-0025">Alternative splicing</keyword>
<keyword id="KW-0156">Chromatin regulator</keyword>
<keyword id="KW-0378">Hydrolase</keyword>
<keyword id="KW-0479">Metal-binding</keyword>
<keyword id="KW-0539">Nucleus</keyword>
<keyword id="KW-1185">Reference proteome</keyword>
<keyword id="KW-0677">Repeat</keyword>
<keyword id="KW-0678">Repressor</keyword>
<keyword id="KW-0804">Transcription</keyword>
<keyword id="KW-0805">Transcription regulation</keyword>
<keyword id="KW-0862">Zinc</keyword>
<keyword id="KW-0863">Zinc-finger</keyword>
<protein>
    <recommendedName>
        <fullName>Histone deacetylase 6</fullName>
        <ecNumber>3.5.1.98</ecNumber>
    </recommendedName>
</protein>
<sequence length="955" mass="106749">MLFEDRQKNRSTGPTLIGFNQTQNEHENTVCPTHPESSDRILKIKEALTKTKILEKCTVLTNFLEIDDADLEVTHDKSMVKDLMESEKKTQEDINSQCEKYDSVFMTENSMKVAKDGVACVRDLTNRIMANEASNGFAVVRPPGHHADSVSPCGFCLFNNVAQAAEEAFFSGAERILIVDLDVHHGHGTQRIFYDDKRVLYFSIHRHEHGLFWPHLPESDFDHIGSGKGLGYNANLALNETGCTDSDYLSIIFHVLLPLATQFDPHFVIISAGFDALLGDPLGGMCLTPDGYSHILYHLKSLAQGRMLVVLEGGYNHQISAVAVQRCVRVLLGYAPFSIELNEAPKESTVDSCVSLVSVLRHHWNCFDYFPSRTSLRLAQWPIVNTKVIYNYDPTTRRADTGEIIQDELASTEFTASDVIPTENMETLIYFNEGDDAHFDLEEDNHPEKPARTRRILKTLRESGVLEKCVDRNCERIATNEEIRLVHTKKMLEHLRTTETMKDEELMEEAEKEFNSIYLTRDTLKVARKAVGAVLQSVDEIFEKDAGQRNALVIVRPPGHHASASKSSGFCIFNNVAVAAKYAQRRHKAKRVLILDWDVHHGNGTQEIFYEDSNVMYMSIHRHDKGNFYPIGEPKDYSDVGEGAGEGMSVNVPFSGVQMGDNEYQMAFQRVIMPIAYQFNPDLVLISAGFDAAVDDPLGEYKVTPETFALMTYQLSSLAGGRIITVLEGGYNLTSISNSAQAVCEVLQNRSMLRRLREEKEQFATKPQKIESSCIKTIREVCAVQQKYWSILKGFQVTPSNYGLDIDDEAYDDDSIDMADQSSSSGSSSSSTRPSHNLEIMDSGPAHAVVPLATCPHLKEVKPLPPAKINARTACSECQIGAEVWTCLTCYKYNCGRFVNEHAMMHHLSSSHPMALSMADLSVWCYPCDSYVHNPALIGAKSAAHESKFGETMPS</sequence>
<gene>
    <name type="primary">hda-6</name>
    <name type="ORF">F41H10.6</name>
</gene>
<proteinExistence type="inferred from homology"/>
<feature type="chain" id="PRO_0000114743" description="Histone deacetylase 6">
    <location>
        <begin position="1"/>
        <end position="955"/>
    </location>
</feature>
<feature type="zinc finger region" description="UBP-type" evidence="2">
    <location>
        <begin position="853"/>
        <end position="951"/>
    </location>
</feature>
<feature type="region of interest" description="Histone deacetylase 1">
    <location>
        <begin position="15"/>
        <end position="337"/>
    </location>
</feature>
<feature type="region of interest" description="Histone deacetylase 2">
    <location>
        <begin position="425"/>
        <end position="749"/>
    </location>
</feature>
<feature type="region of interest" description="Disordered" evidence="3">
    <location>
        <begin position="815"/>
        <end position="840"/>
    </location>
</feature>
<feature type="region of interest" description="Ubiquitin binding" evidence="1">
    <location>
        <begin position="896"/>
        <end position="898"/>
    </location>
</feature>
<feature type="region of interest" description="Ubiquitin binding" evidence="1">
    <location>
        <begin position="924"/>
        <end position="931"/>
    </location>
</feature>
<feature type="compositionally biased region" description="Low complexity" evidence="3">
    <location>
        <begin position="818"/>
        <end position="831"/>
    </location>
</feature>
<feature type="active site" description="1" evidence="1">
    <location>
        <position position="146"/>
    </location>
</feature>
<feature type="active site" description="2" evidence="1">
    <location>
        <position position="561"/>
    </location>
</feature>
<feature type="binding site" evidence="2">
    <location>
        <position position="855"/>
    </location>
    <ligand>
        <name>Zn(2+)</name>
        <dbReference type="ChEBI" id="CHEBI:29105"/>
        <label>1</label>
    </ligand>
</feature>
<feature type="binding site" evidence="2">
    <location>
        <position position="857"/>
    </location>
    <ligand>
        <name>Zn(2+)</name>
        <dbReference type="ChEBI" id="CHEBI:29105"/>
        <label>1</label>
    </ligand>
</feature>
<feature type="binding site" evidence="2">
    <location>
        <position position="875"/>
    </location>
    <ligand>
        <name>Zn(2+)</name>
        <dbReference type="ChEBI" id="CHEBI:29105"/>
        <label>2</label>
    </ligand>
</feature>
<feature type="binding site" evidence="2">
    <location>
        <position position="878"/>
    </location>
    <ligand>
        <name>Zn(2+)</name>
        <dbReference type="ChEBI" id="CHEBI:29105"/>
        <label>2</label>
    </ligand>
</feature>
<feature type="binding site" evidence="2">
    <location>
        <position position="887"/>
    </location>
    <ligand>
        <name>Zn(2+)</name>
        <dbReference type="ChEBI" id="CHEBI:29105"/>
        <label>3</label>
    </ligand>
</feature>
<feature type="binding site" evidence="2">
    <location>
        <position position="890"/>
    </location>
    <ligand>
        <name>Zn(2+)</name>
        <dbReference type="ChEBI" id="CHEBI:29105"/>
        <label>3</label>
    </ligand>
</feature>
<feature type="binding site" evidence="2">
    <location>
        <position position="895"/>
    </location>
    <ligand>
        <name>Zn(2+)</name>
        <dbReference type="ChEBI" id="CHEBI:29105"/>
        <label>2</label>
    </ligand>
</feature>
<feature type="binding site" evidence="2">
    <location>
        <position position="902"/>
    </location>
    <ligand>
        <name>Zn(2+)</name>
        <dbReference type="ChEBI" id="CHEBI:29105"/>
        <label>2</label>
    </ligand>
</feature>
<feature type="binding site" evidence="2">
    <location>
        <position position="906"/>
    </location>
    <ligand>
        <name>Zn(2+)</name>
        <dbReference type="ChEBI" id="CHEBI:29105"/>
        <label>3</label>
    </ligand>
</feature>
<feature type="binding site" evidence="2">
    <location>
        <position position="912"/>
    </location>
    <ligand>
        <name>Zn(2+)</name>
        <dbReference type="ChEBI" id="CHEBI:29105"/>
        <label>3</label>
    </ligand>
</feature>
<feature type="binding site" evidence="2">
    <location>
        <position position="925"/>
    </location>
    <ligand>
        <name>Zn(2+)</name>
        <dbReference type="ChEBI" id="CHEBI:29105"/>
        <label>1</label>
    </ligand>
</feature>
<feature type="binding site" evidence="2">
    <location>
        <position position="928"/>
    </location>
    <ligand>
        <name>Zn(2+)</name>
        <dbReference type="ChEBI" id="CHEBI:29105"/>
        <label>1</label>
    </ligand>
</feature>
<feature type="splice variant" id="VSP_007436" description="In isoform a." evidence="4">
    <original>VTPSNYGLDIDDEAYDDDSIDMADQSSSSGSSSSSTRPSHNLEIMDSGPAHAVVPLATCPHLKEVKP</original>
    <variation>IIIGSVLNSKLINKNGKSSAATLKVKGKAATDPVKQADDSRRYNTRRRRSANDEVEDVMEKLENMKL</variation>
    <location>
        <begin position="797"/>
        <end position="863"/>
    </location>
</feature>
<feature type="splice variant" id="VSP_007437" description="In isoform a." evidence="4">
    <location>
        <begin position="864"/>
        <end position="955"/>
    </location>
</feature>